<feature type="chain" id="PRO_0000415695" description="Inosine-5'-monophosphate dehydrogenase">
    <location>
        <begin position="1"/>
        <end position="485"/>
    </location>
</feature>
<feature type="domain" description="CBS 1" evidence="1">
    <location>
        <begin position="97"/>
        <end position="154"/>
    </location>
</feature>
<feature type="domain" description="CBS 2" evidence="1">
    <location>
        <begin position="155"/>
        <end position="211"/>
    </location>
</feature>
<feature type="active site" description="Thioimidate intermediate" evidence="1">
    <location>
        <position position="302"/>
    </location>
</feature>
<feature type="active site" description="Proton acceptor" evidence="1">
    <location>
        <position position="398"/>
    </location>
</feature>
<feature type="binding site" evidence="1">
    <location>
        <position position="246"/>
    </location>
    <ligand>
        <name>NAD(+)</name>
        <dbReference type="ChEBI" id="CHEBI:57540"/>
    </ligand>
</feature>
<feature type="binding site" evidence="1">
    <location>
        <begin position="295"/>
        <end position="297"/>
    </location>
    <ligand>
        <name>NAD(+)</name>
        <dbReference type="ChEBI" id="CHEBI:57540"/>
    </ligand>
</feature>
<feature type="binding site" description="in other chain" evidence="1">
    <location>
        <position position="297"/>
    </location>
    <ligand>
        <name>K(+)</name>
        <dbReference type="ChEBI" id="CHEBI:29103"/>
        <note>ligand shared between two tetrameric partners</note>
    </ligand>
</feature>
<feature type="binding site" description="in other chain" evidence="1">
    <location>
        <position position="299"/>
    </location>
    <ligand>
        <name>K(+)</name>
        <dbReference type="ChEBI" id="CHEBI:29103"/>
        <note>ligand shared between two tetrameric partners</note>
    </ligand>
</feature>
<feature type="binding site" evidence="1">
    <location>
        <position position="300"/>
    </location>
    <ligand>
        <name>IMP</name>
        <dbReference type="ChEBI" id="CHEBI:58053"/>
    </ligand>
</feature>
<feature type="binding site" description="in other chain" evidence="1">
    <location>
        <position position="302"/>
    </location>
    <ligand>
        <name>K(+)</name>
        <dbReference type="ChEBI" id="CHEBI:29103"/>
        <note>ligand shared between two tetrameric partners</note>
    </ligand>
</feature>
<feature type="binding site" evidence="1">
    <location>
        <begin position="335"/>
        <end position="337"/>
    </location>
    <ligand>
        <name>IMP</name>
        <dbReference type="ChEBI" id="CHEBI:58053"/>
    </ligand>
</feature>
<feature type="binding site" evidence="1">
    <location>
        <begin position="358"/>
        <end position="359"/>
    </location>
    <ligand>
        <name>IMP</name>
        <dbReference type="ChEBI" id="CHEBI:58053"/>
    </ligand>
</feature>
<feature type="binding site" evidence="1">
    <location>
        <begin position="382"/>
        <end position="386"/>
    </location>
    <ligand>
        <name>IMP</name>
        <dbReference type="ChEBI" id="CHEBI:58053"/>
    </ligand>
</feature>
<feature type="binding site" evidence="1">
    <location>
        <position position="409"/>
    </location>
    <ligand>
        <name>IMP</name>
        <dbReference type="ChEBI" id="CHEBI:58053"/>
    </ligand>
</feature>
<feature type="binding site" evidence="1">
    <location>
        <position position="463"/>
    </location>
    <ligand>
        <name>K(+)</name>
        <dbReference type="ChEBI" id="CHEBI:29103"/>
        <note>ligand shared between two tetrameric partners</note>
    </ligand>
</feature>
<feature type="binding site" evidence="1">
    <location>
        <position position="464"/>
    </location>
    <ligand>
        <name>K(+)</name>
        <dbReference type="ChEBI" id="CHEBI:29103"/>
        <note>ligand shared between two tetrameric partners</note>
    </ligand>
</feature>
<feature type="binding site" evidence="1">
    <location>
        <position position="465"/>
    </location>
    <ligand>
        <name>K(+)</name>
        <dbReference type="ChEBI" id="CHEBI:29103"/>
        <note>ligand shared between two tetrameric partners</note>
    </ligand>
</feature>
<name>IMDH_THEAC</name>
<dbReference type="EC" id="1.1.1.205" evidence="1"/>
<dbReference type="EMBL" id="AL445063">
    <property type="protein sequence ID" value="CAC11365.1"/>
    <property type="molecule type" value="Genomic_DNA"/>
</dbReference>
<dbReference type="RefSeq" id="WP_010900646.1">
    <property type="nucleotide sequence ID" value="NC_002578.1"/>
</dbReference>
<dbReference type="SMR" id="Q9HLK8"/>
<dbReference type="STRING" id="273075.gene:9571435"/>
<dbReference type="PaxDb" id="273075-Ta0219"/>
<dbReference type="EnsemblBacteria" id="CAC11365">
    <property type="protein sequence ID" value="CAC11365"/>
    <property type="gene ID" value="CAC11365"/>
</dbReference>
<dbReference type="KEGG" id="tac:Ta0219"/>
<dbReference type="eggNOG" id="arCOG00612">
    <property type="taxonomic scope" value="Archaea"/>
</dbReference>
<dbReference type="HOGENOM" id="CLU_022552_2_1_2"/>
<dbReference type="InParanoid" id="Q9HLK8"/>
<dbReference type="OrthoDB" id="21361at2157"/>
<dbReference type="UniPathway" id="UPA00601">
    <property type="reaction ID" value="UER00295"/>
</dbReference>
<dbReference type="Proteomes" id="UP000001024">
    <property type="component" value="Chromosome"/>
</dbReference>
<dbReference type="GO" id="GO:0003938">
    <property type="term" value="F:IMP dehydrogenase activity"/>
    <property type="evidence" value="ECO:0007669"/>
    <property type="project" value="UniProtKB-UniRule"/>
</dbReference>
<dbReference type="GO" id="GO:0046872">
    <property type="term" value="F:metal ion binding"/>
    <property type="evidence" value="ECO:0007669"/>
    <property type="project" value="UniProtKB-UniRule"/>
</dbReference>
<dbReference type="GO" id="GO:0000166">
    <property type="term" value="F:nucleotide binding"/>
    <property type="evidence" value="ECO:0007669"/>
    <property type="project" value="UniProtKB-UniRule"/>
</dbReference>
<dbReference type="GO" id="GO:0006177">
    <property type="term" value="P:GMP biosynthetic process"/>
    <property type="evidence" value="ECO:0007669"/>
    <property type="project" value="UniProtKB-UniRule"/>
</dbReference>
<dbReference type="GO" id="GO:0006183">
    <property type="term" value="P:GTP biosynthetic process"/>
    <property type="evidence" value="ECO:0007669"/>
    <property type="project" value="TreeGrafter"/>
</dbReference>
<dbReference type="CDD" id="cd04601">
    <property type="entry name" value="CBS_pair_IMPDH"/>
    <property type="match status" value="1"/>
</dbReference>
<dbReference type="CDD" id="cd00381">
    <property type="entry name" value="IMPDH"/>
    <property type="match status" value="1"/>
</dbReference>
<dbReference type="FunFam" id="3.20.20.70:FF:000003">
    <property type="entry name" value="GMP reductase"/>
    <property type="match status" value="1"/>
</dbReference>
<dbReference type="Gene3D" id="3.20.20.70">
    <property type="entry name" value="Aldolase class I"/>
    <property type="match status" value="1"/>
</dbReference>
<dbReference type="HAMAP" id="MF_01964">
    <property type="entry name" value="IMPDH"/>
    <property type="match status" value="1"/>
</dbReference>
<dbReference type="InterPro" id="IPR013785">
    <property type="entry name" value="Aldolase_TIM"/>
</dbReference>
<dbReference type="InterPro" id="IPR000644">
    <property type="entry name" value="CBS_dom"/>
</dbReference>
<dbReference type="InterPro" id="IPR046342">
    <property type="entry name" value="CBS_dom_sf"/>
</dbReference>
<dbReference type="InterPro" id="IPR005990">
    <property type="entry name" value="IMP_DH"/>
</dbReference>
<dbReference type="InterPro" id="IPR015875">
    <property type="entry name" value="IMP_DH/GMP_Rdtase_CS"/>
</dbReference>
<dbReference type="InterPro" id="IPR001093">
    <property type="entry name" value="IMP_DH_GMPRt"/>
</dbReference>
<dbReference type="NCBIfam" id="TIGR01302">
    <property type="entry name" value="IMP_dehydrog"/>
    <property type="match status" value="1"/>
</dbReference>
<dbReference type="PANTHER" id="PTHR11911:SF111">
    <property type="entry name" value="INOSINE-5'-MONOPHOSPHATE DEHYDROGENASE"/>
    <property type="match status" value="1"/>
</dbReference>
<dbReference type="PANTHER" id="PTHR11911">
    <property type="entry name" value="INOSINE-5-MONOPHOSPHATE DEHYDROGENASE RELATED"/>
    <property type="match status" value="1"/>
</dbReference>
<dbReference type="Pfam" id="PF00571">
    <property type="entry name" value="CBS"/>
    <property type="match status" value="2"/>
</dbReference>
<dbReference type="Pfam" id="PF00478">
    <property type="entry name" value="IMPDH"/>
    <property type="match status" value="1"/>
</dbReference>
<dbReference type="PIRSF" id="PIRSF000130">
    <property type="entry name" value="IMPDH"/>
    <property type="match status" value="1"/>
</dbReference>
<dbReference type="SMART" id="SM00116">
    <property type="entry name" value="CBS"/>
    <property type="match status" value="2"/>
</dbReference>
<dbReference type="SMART" id="SM01240">
    <property type="entry name" value="IMPDH"/>
    <property type="match status" value="1"/>
</dbReference>
<dbReference type="SUPFAM" id="SSF54631">
    <property type="entry name" value="CBS-domain pair"/>
    <property type="match status" value="1"/>
</dbReference>
<dbReference type="SUPFAM" id="SSF51412">
    <property type="entry name" value="Inosine monophosphate dehydrogenase (IMPDH)"/>
    <property type="match status" value="1"/>
</dbReference>
<dbReference type="PROSITE" id="PS51371">
    <property type="entry name" value="CBS"/>
    <property type="match status" value="2"/>
</dbReference>
<dbReference type="PROSITE" id="PS00487">
    <property type="entry name" value="IMP_DH_GMP_RED"/>
    <property type="match status" value="1"/>
</dbReference>
<protein>
    <recommendedName>
        <fullName evidence="1">Inosine-5'-monophosphate dehydrogenase</fullName>
        <shortName evidence="1">IMP dehydrogenase</shortName>
        <shortName evidence="1">IMPD</shortName>
        <shortName evidence="1">IMPDH</shortName>
        <ecNumber evidence="1">1.1.1.205</ecNumber>
    </recommendedName>
</protein>
<comment type="function">
    <text evidence="1">Catalyzes the conversion of inosine 5'-phosphate (IMP) to xanthosine 5'-phosphate (XMP), the first committed and rate-limiting step in the de novo synthesis of guanine nucleotides, and therefore plays an important role in the regulation of cell growth.</text>
</comment>
<comment type="catalytic activity">
    <reaction evidence="1">
        <text>IMP + NAD(+) + H2O = XMP + NADH + H(+)</text>
        <dbReference type="Rhea" id="RHEA:11708"/>
        <dbReference type="ChEBI" id="CHEBI:15377"/>
        <dbReference type="ChEBI" id="CHEBI:15378"/>
        <dbReference type="ChEBI" id="CHEBI:57464"/>
        <dbReference type="ChEBI" id="CHEBI:57540"/>
        <dbReference type="ChEBI" id="CHEBI:57945"/>
        <dbReference type="ChEBI" id="CHEBI:58053"/>
        <dbReference type="EC" id="1.1.1.205"/>
    </reaction>
</comment>
<comment type="cofactor">
    <cofactor evidence="1">
        <name>K(+)</name>
        <dbReference type="ChEBI" id="CHEBI:29103"/>
    </cofactor>
</comment>
<comment type="activity regulation">
    <text evidence="1">Mycophenolic acid (MPA) is a non-competitive inhibitor that prevents formation of the closed enzyme conformation by binding to the same site as the amobile flap. In contrast, mizoribine monophosphate (MZP) is a competitive inhibitor that induces the closed conformation. MPA is a potent inhibitor of mammalian IMPDHs but a poor inhibitor of the bacterial enzymes. MZP is a more potent inhibitor of bacterial IMPDH.</text>
</comment>
<comment type="pathway">
    <text evidence="1">Purine metabolism; XMP biosynthesis via de novo pathway; XMP from IMP: step 1/1.</text>
</comment>
<comment type="subunit">
    <text evidence="1">Homotetramer.</text>
</comment>
<comment type="similarity">
    <text evidence="1">Belongs to the IMPDH/GMPR family.</text>
</comment>
<sequence length="485" mass="52225">MYREKFTKITEGFTFDDVLLIPMRTAVEPKNVVVSSRISRHIQVKVPIVSSPMDTVTEDAMAIAMARYGAIGVIHRNQPREKEVEMVKRVKREETIIIRDVYTISPETPIEVARTLMATRNIAGLPVVKDDKLVGIVTKRDLEFVKKGSSVSDVMVRDVITAPENVDIDEAIEILHKNRIEKLPLVDSSGHLVGLITAKDIITRQKFPDASRDSEGQLMVGAAVGPFDLDRAVEVEKAGADFIVVDTAHADNENVLSSLKKMRKQISVDIVAGNIATAQAAEDLISCDVDGLRVGIGPGSICTTRIVAGVGVPQLTAISDVAEAAKDSGIPVIADGGIRYSGDIVKAIAAGADAVMLGSMLAGTEESPGQEMIINGRKYKAYRGMGSIGALTTGLSDRYSKLGNGFIAEGVEGAVPYRGRVDEVLFQLVGGLRTGMGYVGAATIEDLKRNGKFVRITNNGLRESHPHDIRLISEPPNYQISNISP</sequence>
<proteinExistence type="inferred from homology"/>
<keyword id="KW-0129">CBS domain</keyword>
<keyword id="KW-0332">GMP biosynthesis</keyword>
<keyword id="KW-0479">Metal-binding</keyword>
<keyword id="KW-0520">NAD</keyword>
<keyword id="KW-0560">Oxidoreductase</keyword>
<keyword id="KW-0630">Potassium</keyword>
<keyword id="KW-0658">Purine biosynthesis</keyword>
<keyword id="KW-1185">Reference proteome</keyword>
<keyword id="KW-0677">Repeat</keyword>
<reference key="1">
    <citation type="journal article" date="2000" name="Nature">
        <title>The genome sequence of the thermoacidophilic scavenger Thermoplasma acidophilum.</title>
        <authorList>
            <person name="Ruepp A."/>
            <person name="Graml W."/>
            <person name="Santos-Martinez M.-L."/>
            <person name="Koretke K.K."/>
            <person name="Volker C."/>
            <person name="Mewes H.-W."/>
            <person name="Frishman D."/>
            <person name="Stocker S."/>
            <person name="Lupas A.N."/>
            <person name="Baumeister W."/>
        </authorList>
    </citation>
    <scope>NUCLEOTIDE SEQUENCE [LARGE SCALE GENOMIC DNA]</scope>
    <source>
        <strain>ATCC 25905 / DSM 1728 / JCM 9062 / NBRC 15155 / AMRC-C165</strain>
    </source>
</reference>
<organism>
    <name type="scientific">Thermoplasma acidophilum (strain ATCC 25905 / DSM 1728 / JCM 9062 / NBRC 15155 / AMRC-C165)</name>
    <dbReference type="NCBI Taxonomy" id="273075"/>
    <lineage>
        <taxon>Archaea</taxon>
        <taxon>Methanobacteriati</taxon>
        <taxon>Thermoplasmatota</taxon>
        <taxon>Thermoplasmata</taxon>
        <taxon>Thermoplasmatales</taxon>
        <taxon>Thermoplasmataceae</taxon>
        <taxon>Thermoplasma</taxon>
    </lineage>
</organism>
<evidence type="ECO:0000255" key="1">
    <source>
        <dbReference type="HAMAP-Rule" id="MF_01964"/>
    </source>
</evidence>
<gene>
    <name evidence="1" type="primary">guaB</name>
    <name type="ordered locus">Ta0219</name>
</gene>
<accession>Q9HLK8</accession>